<name>CP2DQ_MOUSE</name>
<organism>
    <name type="scientific">Mus musculus</name>
    <name type="common">Mouse</name>
    <dbReference type="NCBI Taxonomy" id="10090"/>
    <lineage>
        <taxon>Eukaryota</taxon>
        <taxon>Metazoa</taxon>
        <taxon>Chordata</taxon>
        <taxon>Craniata</taxon>
        <taxon>Vertebrata</taxon>
        <taxon>Euteleostomi</taxon>
        <taxon>Mammalia</taxon>
        <taxon>Eutheria</taxon>
        <taxon>Euarchontoglires</taxon>
        <taxon>Glires</taxon>
        <taxon>Rodentia</taxon>
        <taxon>Myomorpha</taxon>
        <taxon>Muroidea</taxon>
        <taxon>Muridae</taxon>
        <taxon>Murinae</taxon>
        <taxon>Mus</taxon>
        <taxon>Mus</taxon>
    </lineage>
</organism>
<dbReference type="EC" id="1.14.14.1"/>
<dbReference type="EMBL" id="AK004915">
    <property type="protein sequence ID" value="BAB23666.1"/>
    <property type="molecule type" value="mRNA"/>
</dbReference>
<dbReference type="EMBL" id="BC023241">
    <property type="protein sequence ID" value="AAH23241.1"/>
    <property type="molecule type" value="mRNA"/>
</dbReference>
<dbReference type="CCDS" id="CCDS37163.1"/>
<dbReference type="RefSeq" id="NP_083838.1">
    <property type="nucleotide sequence ID" value="NM_029562.2"/>
</dbReference>
<dbReference type="SMR" id="Q8CIM7"/>
<dbReference type="FunCoup" id="Q8CIM7">
    <property type="interactions" value="1423"/>
</dbReference>
<dbReference type="IntAct" id="Q8CIM7">
    <property type="interactions" value="1"/>
</dbReference>
<dbReference type="STRING" id="10090.ENSMUSP00000006094"/>
<dbReference type="GlyGen" id="Q8CIM7">
    <property type="glycosylation" value="1 site, 1 O-linked glycan (1 site)"/>
</dbReference>
<dbReference type="iPTMnet" id="Q8CIM7"/>
<dbReference type="PhosphoSitePlus" id="Q8CIM7"/>
<dbReference type="SwissPalm" id="Q8CIM7"/>
<dbReference type="jPOST" id="Q8CIM7"/>
<dbReference type="PaxDb" id="10090-ENSMUSP00000006094"/>
<dbReference type="PeptideAtlas" id="Q8CIM7"/>
<dbReference type="ProteomicsDB" id="283442"/>
<dbReference type="DNASU" id="76279"/>
<dbReference type="GeneID" id="76279"/>
<dbReference type="KEGG" id="mmu:76279"/>
<dbReference type="UCSC" id="uc007wzn.1">
    <property type="organism name" value="mouse"/>
</dbReference>
<dbReference type="AGR" id="MGI:1923529"/>
<dbReference type="CTD" id="76279"/>
<dbReference type="MGI" id="MGI:1923529">
    <property type="gene designation" value="Cyp2d26"/>
</dbReference>
<dbReference type="eggNOG" id="KOG0156">
    <property type="taxonomic scope" value="Eukaryota"/>
</dbReference>
<dbReference type="InParanoid" id="Q8CIM7"/>
<dbReference type="OrthoDB" id="3934656at2759"/>
<dbReference type="PhylomeDB" id="Q8CIM7"/>
<dbReference type="TreeFam" id="TF352043"/>
<dbReference type="BioGRID-ORCS" id="76279">
    <property type="hits" value="2 hits in 76 CRISPR screens"/>
</dbReference>
<dbReference type="PRO" id="PR:Q8CIM7"/>
<dbReference type="Proteomes" id="UP000000589">
    <property type="component" value="Unplaced"/>
</dbReference>
<dbReference type="RNAct" id="Q8CIM7">
    <property type="molecule type" value="protein"/>
</dbReference>
<dbReference type="GO" id="GO:0005789">
    <property type="term" value="C:endoplasmic reticulum membrane"/>
    <property type="evidence" value="ECO:0007669"/>
    <property type="project" value="UniProtKB-SubCell"/>
</dbReference>
<dbReference type="GO" id="GO:0020037">
    <property type="term" value="F:heme binding"/>
    <property type="evidence" value="ECO:0007669"/>
    <property type="project" value="InterPro"/>
</dbReference>
<dbReference type="GO" id="GO:0005506">
    <property type="term" value="F:iron ion binding"/>
    <property type="evidence" value="ECO:0007669"/>
    <property type="project" value="InterPro"/>
</dbReference>
<dbReference type="GO" id="GO:0016712">
    <property type="term" value="F:oxidoreductase activity, acting on paired donors, with incorporation or reduction of molecular oxygen, reduced flavin or flavoprotein as one donor, and incorporation of one atom of oxygen"/>
    <property type="evidence" value="ECO:0007669"/>
    <property type="project" value="UniProtKB-EC"/>
</dbReference>
<dbReference type="CDD" id="cd20663">
    <property type="entry name" value="CYP2D"/>
    <property type="match status" value="1"/>
</dbReference>
<dbReference type="FunFam" id="1.10.630.10:FF:000004">
    <property type="entry name" value="cytochrome P450 2D15 isoform X1"/>
    <property type="match status" value="1"/>
</dbReference>
<dbReference type="Gene3D" id="1.10.630.10">
    <property type="entry name" value="Cytochrome P450"/>
    <property type="match status" value="1"/>
</dbReference>
<dbReference type="InterPro" id="IPR001128">
    <property type="entry name" value="Cyt_P450"/>
</dbReference>
<dbReference type="InterPro" id="IPR017972">
    <property type="entry name" value="Cyt_P450_CS"/>
</dbReference>
<dbReference type="InterPro" id="IPR002401">
    <property type="entry name" value="Cyt_P450_E_grp-I"/>
</dbReference>
<dbReference type="InterPro" id="IPR008069">
    <property type="entry name" value="Cyt_P450_E_grp-I_CYP2D-like"/>
</dbReference>
<dbReference type="InterPro" id="IPR036396">
    <property type="entry name" value="Cyt_P450_sf"/>
</dbReference>
<dbReference type="InterPro" id="IPR050182">
    <property type="entry name" value="Cytochrome_P450_fam2"/>
</dbReference>
<dbReference type="PANTHER" id="PTHR24300:SF109">
    <property type="entry name" value="CYTOCHROME P450 2D26"/>
    <property type="match status" value="1"/>
</dbReference>
<dbReference type="PANTHER" id="PTHR24300">
    <property type="entry name" value="CYTOCHROME P450 508A4-RELATED"/>
    <property type="match status" value="1"/>
</dbReference>
<dbReference type="Pfam" id="PF00067">
    <property type="entry name" value="p450"/>
    <property type="match status" value="1"/>
</dbReference>
<dbReference type="PRINTS" id="PR00463">
    <property type="entry name" value="EP450I"/>
</dbReference>
<dbReference type="PRINTS" id="PR01686">
    <property type="entry name" value="EP450ICYP2D"/>
</dbReference>
<dbReference type="PRINTS" id="PR00385">
    <property type="entry name" value="P450"/>
</dbReference>
<dbReference type="SUPFAM" id="SSF48264">
    <property type="entry name" value="Cytochrome P450"/>
    <property type="match status" value="1"/>
</dbReference>
<dbReference type="PROSITE" id="PS00086">
    <property type="entry name" value="CYTOCHROME_P450"/>
    <property type="match status" value="1"/>
</dbReference>
<gene>
    <name evidence="5 7" type="primary">Cyp2d26</name>
    <name evidence="2" type="synonym">Cyp2d-26</name>
</gene>
<reference key="1">
    <citation type="journal article" date="2005" name="Science">
        <title>The transcriptional landscape of the mammalian genome.</title>
        <authorList>
            <person name="Carninci P."/>
            <person name="Kasukawa T."/>
            <person name="Katayama S."/>
            <person name="Gough J."/>
            <person name="Frith M.C."/>
            <person name="Maeda N."/>
            <person name="Oyama R."/>
            <person name="Ravasi T."/>
            <person name="Lenhard B."/>
            <person name="Wells C."/>
            <person name="Kodzius R."/>
            <person name="Shimokawa K."/>
            <person name="Bajic V.B."/>
            <person name="Brenner S.E."/>
            <person name="Batalov S."/>
            <person name="Forrest A.R."/>
            <person name="Zavolan M."/>
            <person name="Davis M.J."/>
            <person name="Wilming L.G."/>
            <person name="Aidinis V."/>
            <person name="Allen J.E."/>
            <person name="Ambesi-Impiombato A."/>
            <person name="Apweiler R."/>
            <person name="Aturaliya R.N."/>
            <person name="Bailey T.L."/>
            <person name="Bansal M."/>
            <person name="Baxter L."/>
            <person name="Beisel K.W."/>
            <person name="Bersano T."/>
            <person name="Bono H."/>
            <person name="Chalk A.M."/>
            <person name="Chiu K.P."/>
            <person name="Choudhary V."/>
            <person name="Christoffels A."/>
            <person name="Clutterbuck D.R."/>
            <person name="Crowe M.L."/>
            <person name="Dalla E."/>
            <person name="Dalrymple B.P."/>
            <person name="de Bono B."/>
            <person name="Della Gatta G."/>
            <person name="di Bernardo D."/>
            <person name="Down T."/>
            <person name="Engstrom P."/>
            <person name="Fagiolini M."/>
            <person name="Faulkner G."/>
            <person name="Fletcher C.F."/>
            <person name="Fukushima T."/>
            <person name="Furuno M."/>
            <person name="Futaki S."/>
            <person name="Gariboldi M."/>
            <person name="Georgii-Hemming P."/>
            <person name="Gingeras T.R."/>
            <person name="Gojobori T."/>
            <person name="Green R.E."/>
            <person name="Gustincich S."/>
            <person name="Harbers M."/>
            <person name="Hayashi Y."/>
            <person name="Hensch T.K."/>
            <person name="Hirokawa N."/>
            <person name="Hill D."/>
            <person name="Huminiecki L."/>
            <person name="Iacono M."/>
            <person name="Ikeo K."/>
            <person name="Iwama A."/>
            <person name="Ishikawa T."/>
            <person name="Jakt M."/>
            <person name="Kanapin A."/>
            <person name="Katoh M."/>
            <person name="Kawasawa Y."/>
            <person name="Kelso J."/>
            <person name="Kitamura H."/>
            <person name="Kitano H."/>
            <person name="Kollias G."/>
            <person name="Krishnan S.P."/>
            <person name="Kruger A."/>
            <person name="Kummerfeld S.K."/>
            <person name="Kurochkin I.V."/>
            <person name="Lareau L.F."/>
            <person name="Lazarevic D."/>
            <person name="Lipovich L."/>
            <person name="Liu J."/>
            <person name="Liuni S."/>
            <person name="McWilliam S."/>
            <person name="Madan Babu M."/>
            <person name="Madera M."/>
            <person name="Marchionni L."/>
            <person name="Matsuda H."/>
            <person name="Matsuzawa S."/>
            <person name="Miki H."/>
            <person name="Mignone F."/>
            <person name="Miyake S."/>
            <person name="Morris K."/>
            <person name="Mottagui-Tabar S."/>
            <person name="Mulder N."/>
            <person name="Nakano N."/>
            <person name="Nakauchi H."/>
            <person name="Ng P."/>
            <person name="Nilsson R."/>
            <person name="Nishiguchi S."/>
            <person name="Nishikawa S."/>
            <person name="Nori F."/>
            <person name="Ohara O."/>
            <person name="Okazaki Y."/>
            <person name="Orlando V."/>
            <person name="Pang K.C."/>
            <person name="Pavan W.J."/>
            <person name="Pavesi G."/>
            <person name="Pesole G."/>
            <person name="Petrovsky N."/>
            <person name="Piazza S."/>
            <person name="Reed J."/>
            <person name="Reid J.F."/>
            <person name="Ring B.Z."/>
            <person name="Ringwald M."/>
            <person name="Rost B."/>
            <person name="Ruan Y."/>
            <person name="Salzberg S.L."/>
            <person name="Sandelin A."/>
            <person name="Schneider C."/>
            <person name="Schoenbach C."/>
            <person name="Sekiguchi K."/>
            <person name="Semple C.A."/>
            <person name="Seno S."/>
            <person name="Sessa L."/>
            <person name="Sheng Y."/>
            <person name="Shibata Y."/>
            <person name="Shimada H."/>
            <person name="Shimada K."/>
            <person name="Silva D."/>
            <person name="Sinclair B."/>
            <person name="Sperling S."/>
            <person name="Stupka E."/>
            <person name="Sugiura K."/>
            <person name="Sultana R."/>
            <person name="Takenaka Y."/>
            <person name="Taki K."/>
            <person name="Tammoja K."/>
            <person name="Tan S.L."/>
            <person name="Tang S."/>
            <person name="Taylor M.S."/>
            <person name="Tegner J."/>
            <person name="Teichmann S.A."/>
            <person name="Ueda H.R."/>
            <person name="van Nimwegen E."/>
            <person name="Verardo R."/>
            <person name="Wei C.L."/>
            <person name="Yagi K."/>
            <person name="Yamanishi H."/>
            <person name="Zabarovsky E."/>
            <person name="Zhu S."/>
            <person name="Zimmer A."/>
            <person name="Hide W."/>
            <person name="Bult C."/>
            <person name="Grimmond S.M."/>
            <person name="Teasdale R.D."/>
            <person name="Liu E.T."/>
            <person name="Brusic V."/>
            <person name="Quackenbush J."/>
            <person name="Wahlestedt C."/>
            <person name="Mattick J.S."/>
            <person name="Hume D.A."/>
            <person name="Kai C."/>
            <person name="Sasaki D."/>
            <person name="Tomaru Y."/>
            <person name="Fukuda S."/>
            <person name="Kanamori-Katayama M."/>
            <person name="Suzuki M."/>
            <person name="Aoki J."/>
            <person name="Arakawa T."/>
            <person name="Iida J."/>
            <person name="Imamura K."/>
            <person name="Itoh M."/>
            <person name="Kato T."/>
            <person name="Kawaji H."/>
            <person name="Kawagashira N."/>
            <person name="Kawashima T."/>
            <person name="Kojima M."/>
            <person name="Kondo S."/>
            <person name="Konno H."/>
            <person name="Nakano K."/>
            <person name="Ninomiya N."/>
            <person name="Nishio T."/>
            <person name="Okada M."/>
            <person name="Plessy C."/>
            <person name="Shibata K."/>
            <person name="Shiraki T."/>
            <person name="Suzuki S."/>
            <person name="Tagami M."/>
            <person name="Waki K."/>
            <person name="Watahiki A."/>
            <person name="Okamura-Oho Y."/>
            <person name="Suzuki H."/>
            <person name="Kawai J."/>
            <person name="Hayashizaki Y."/>
        </authorList>
    </citation>
    <scope>NUCLEOTIDE SEQUENCE [LARGE SCALE MRNA]</scope>
    <source>
        <strain evidence="6">C57BL/6J</strain>
        <tissue evidence="6">Liver</tissue>
    </source>
</reference>
<reference key="2">
    <citation type="journal article" date="2004" name="Genome Res.">
        <title>The status, quality, and expansion of the NIH full-length cDNA project: the Mammalian Gene Collection (MGC).</title>
        <authorList>
            <consortium name="The MGC Project Team"/>
        </authorList>
    </citation>
    <scope>NUCLEOTIDE SEQUENCE [LARGE SCALE MRNA]</scope>
    <source>
        <strain evidence="5">FVB/N</strain>
        <tissue evidence="5">Kidney</tissue>
    </source>
</reference>
<reference key="3">
    <citation type="journal article" date="2010" name="Cell">
        <title>A tissue-specific atlas of mouse protein phosphorylation and expression.</title>
        <authorList>
            <person name="Huttlin E.L."/>
            <person name="Jedrychowski M.P."/>
            <person name="Elias J.E."/>
            <person name="Goswami T."/>
            <person name="Rad R."/>
            <person name="Beausoleil S.A."/>
            <person name="Villen J."/>
            <person name="Haas W."/>
            <person name="Sowa M.E."/>
            <person name="Gygi S.P."/>
        </authorList>
    </citation>
    <scope>IDENTIFICATION BY MASS SPECTROMETRY [LARGE SCALE ANALYSIS]</scope>
    <source>
        <tissue>Kidney</tissue>
        <tissue>Liver</tissue>
    </source>
</reference>
<evidence type="ECO:0000250" key="1"/>
<evidence type="ECO:0000250" key="2">
    <source>
        <dbReference type="UniProtKB" id="P10634"/>
    </source>
</evidence>
<evidence type="ECO:0000255" key="3"/>
<evidence type="ECO:0000305" key="4"/>
<evidence type="ECO:0000312" key="5">
    <source>
        <dbReference type="EMBL" id="AAH23241.1"/>
    </source>
</evidence>
<evidence type="ECO:0000312" key="6">
    <source>
        <dbReference type="EMBL" id="BAB23666.1"/>
    </source>
</evidence>
<evidence type="ECO:0000312" key="7">
    <source>
        <dbReference type="MGI" id="MGI:1923529"/>
    </source>
</evidence>
<comment type="function">
    <text evidence="2">Cytochromes P450 are a group of heme-thiolate monooxygenases. In liver microsomes, this enzyme is involved in an NADPH-dependent electron transport pathway. It oxidizes a variety of structurally unrelated compounds, including steroids, fatty acids, and xenobiotics.</text>
</comment>
<comment type="catalytic activity">
    <reaction>
        <text>an organic molecule + reduced [NADPH--hemoprotein reductase] + O2 = an alcohol + oxidized [NADPH--hemoprotein reductase] + H2O + H(+)</text>
        <dbReference type="Rhea" id="RHEA:17149"/>
        <dbReference type="Rhea" id="RHEA-COMP:11964"/>
        <dbReference type="Rhea" id="RHEA-COMP:11965"/>
        <dbReference type="ChEBI" id="CHEBI:15377"/>
        <dbReference type="ChEBI" id="CHEBI:15378"/>
        <dbReference type="ChEBI" id="CHEBI:15379"/>
        <dbReference type="ChEBI" id="CHEBI:30879"/>
        <dbReference type="ChEBI" id="CHEBI:57618"/>
        <dbReference type="ChEBI" id="CHEBI:58210"/>
        <dbReference type="ChEBI" id="CHEBI:142491"/>
        <dbReference type="EC" id="1.14.14.1"/>
    </reaction>
</comment>
<comment type="cofactor">
    <cofactor evidence="1">
        <name>heme</name>
        <dbReference type="ChEBI" id="CHEBI:30413"/>
    </cofactor>
</comment>
<comment type="subcellular location">
    <subcellularLocation>
        <location evidence="1">Endoplasmic reticulum membrane</location>
        <topology evidence="1">Peripheral membrane protein</topology>
    </subcellularLocation>
    <subcellularLocation>
        <location evidence="1">Microsome membrane</location>
        <topology evidence="1">Peripheral membrane protein</topology>
    </subcellularLocation>
</comment>
<comment type="induction">
    <text evidence="4">P450 can be induced to high levels in liver and other tissues by various foreign compounds, including drugs, pesticides, and carcinogens.</text>
</comment>
<comment type="similarity">
    <text evidence="3">Belongs to the cytochrome P450 family.</text>
</comment>
<feature type="chain" id="PRO_0000051746" description="Cytochrome P450 2D26">
    <location>
        <begin position="1"/>
        <end position="500"/>
    </location>
</feature>
<feature type="binding site" description="axial binding residue" evidence="2">
    <location>
        <position position="446"/>
    </location>
    <ligand>
        <name>heme</name>
        <dbReference type="ChEBI" id="CHEBI:30413"/>
    </ligand>
    <ligandPart>
        <name>Fe</name>
        <dbReference type="ChEBI" id="CHEBI:18248"/>
    </ligandPart>
</feature>
<feature type="modified residue" description="Phosphoserine" evidence="2">
    <location>
        <position position="249"/>
    </location>
</feature>
<feature type="sequence conflict" description="In Ref. 1; BAB23666." evidence="4" ref="1">
    <original>L</original>
    <variation>S</variation>
    <location>
        <position position="263"/>
    </location>
</feature>
<protein>
    <recommendedName>
        <fullName>Cytochrome P450 2D26</fullName>
        <ecNumber>1.14.14.1</ecNumber>
    </recommendedName>
    <alternativeName>
        <fullName>CYPIID26</fullName>
    </alternativeName>
</protein>
<accession>Q8CIM7</accession>
<accession>Q9DBJ5</accession>
<keyword id="KW-0256">Endoplasmic reticulum</keyword>
<keyword id="KW-0349">Heme</keyword>
<keyword id="KW-0408">Iron</keyword>
<keyword id="KW-0472">Membrane</keyword>
<keyword id="KW-0479">Metal-binding</keyword>
<keyword id="KW-0492">Microsome</keyword>
<keyword id="KW-0503">Monooxygenase</keyword>
<keyword id="KW-0560">Oxidoreductase</keyword>
<keyword id="KW-0597">Phosphoprotein</keyword>
<keyword id="KW-1185">Reference proteome</keyword>
<sequence length="500" mass="56976">MGLLVGDDLWAVVIFTAIFLLLVDLVHRRQRWTACYPPGPVPFPGLGNLLQVDFENIPYSFYKLQNRYGNVFSLQMAWKPVVVVNGLKAVRELLVTYGEDTSDRPLMPIYNHIGYGHKSKGVILAPYGPEWREQRRFSVSTLRDFGLGKKSLEQWVTEEAGHLCDAFTKEAEHPFNPSPLLSKAVSNVIASLIYARRFEYEDPFFNRMLKTLKESLGEDTGFVGEVLNAIPMLLHIPGLPDKAFPKLNSFIALVNKMLIEHDLTWDPAQPPRDLTDAFLAEVEKAKGNPESSFNDKNLRIVVIDLFMAGMVTTSTTLSWALLLMILHPDVQRRVHQEIDEVIGHVRHPEMADQARMPYTNAVIHEVQRFADIVPTNLPHMTSRDIKFQDFFIPKGTTLIPNLSSVLKDETVWEKPLRFYPEHFLDAQGHFVKHEAFMPFSAGRRSCLGEPLARMELFLFFTCLLQRFSFSVPDGQPRPSDYGIYTMPVTPEPYQLCAVAR</sequence>
<proteinExistence type="evidence at protein level"/>